<name>CUSR_ECOLI</name>
<organism>
    <name type="scientific">Escherichia coli (strain K12)</name>
    <dbReference type="NCBI Taxonomy" id="83333"/>
    <lineage>
        <taxon>Bacteria</taxon>
        <taxon>Pseudomonadati</taxon>
        <taxon>Pseudomonadota</taxon>
        <taxon>Gammaproteobacteria</taxon>
        <taxon>Enterobacterales</taxon>
        <taxon>Enterobacteriaceae</taxon>
        <taxon>Escherichia</taxon>
    </lineage>
</organism>
<evidence type="ECO:0000255" key="1">
    <source>
        <dbReference type="PROSITE-ProRule" id="PRU00169"/>
    </source>
</evidence>
<evidence type="ECO:0000255" key="2">
    <source>
        <dbReference type="PROSITE-ProRule" id="PRU01091"/>
    </source>
</evidence>
<evidence type="ECO:0000269" key="3">
    <source>
    </source>
</evidence>
<evidence type="ECO:0000269" key="4">
    <source>
    </source>
</evidence>
<evidence type="ECO:0000269" key="5">
    <source>
    </source>
</evidence>
<evidence type="ECO:0000269" key="6">
    <source>
    </source>
</evidence>
<evidence type="ECO:0000269" key="7">
    <source>
    </source>
</evidence>
<evidence type="ECO:0000269" key="8">
    <source>
    </source>
</evidence>
<evidence type="ECO:0000305" key="9"/>
<proteinExistence type="evidence at protein level"/>
<dbReference type="EMBL" id="AF245661">
    <property type="protein sequence ID" value="AAF70175.1"/>
    <property type="molecule type" value="Genomic_DNA"/>
</dbReference>
<dbReference type="EMBL" id="U82598">
    <property type="protein sequence ID" value="AAB40769.1"/>
    <property type="molecule type" value="Genomic_DNA"/>
</dbReference>
<dbReference type="EMBL" id="U00096">
    <property type="protein sequence ID" value="AAC73672.1"/>
    <property type="molecule type" value="Genomic_DNA"/>
</dbReference>
<dbReference type="EMBL" id="AP009048">
    <property type="protein sequence ID" value="BAA35205.1"/>
    <property type="molecule type" value="Genomic_DNA"/>
</dbReference>
<dbReference type="EMBL" id="U82579">
    <property type="protein sequence ID" value="AAB41754.1"/>
    <property type="molecule type" value="Genomic_DNA"/>
</dbReference>
<dbReference type="PIR" id="A64790">
    <property type="entry name" value="A64790"/>
</dbReference>
<dbReference type="RefSeq" id="NP_415103.1">
    <property type="nucleotide sequence ID" value="NC_000913.3"/>
</dbReference>
<dbReference type="RefSeq" id="WP_000770953.1">
    <property type="nucleotide sequence ID" value="NZ_SSZK01000024.1"/>
</dbReference>
<dbReference type="SMR" id="P0ACZ8"/>
<dbReference type="BioGRID" id="4259891">
    <property type="interactions" value="111"/>
</dbReference>
<dbReference type="BioGRID" id="849397">
    <property type="interactions" value="2"/>
</dbReference>
<dbReference type="DIP" id="DIP-9348N"/>
<dbReference type="FunCoup" id="P0ACZ8">
    <property type="interactions" value="550"/>
</dbReference>
<dbReference type="IntAct" id="P0ACZ8">
    <property type="interactions" value="9"/>
</dbReference>
<dbReference type="STRING" id="511145.b0571"/>
<dbReference type="jPOST" id="P0ACZ8"/>
<dbReference type="PaxDb" id="511145-b0571"/>
<dbReference type="EnsemblBacteria" id="AAC73672">
    <property type="protein sequence ID" value="AAC73672"/>
    <property type="gene ID" value="b0571"/>
</dbReference>
<dbReference type="GeneID" id="93776917"/>
<dbReference type="GeneID" id="945003"/>
<dbReference type="KEGG" id="ecj:JW0560"/>
<dbReference type="KEGG" id="eco:b0571"/>
<dbReference type="KEGG" id="ecoc:C3026_02835"/>
<dbReference type="PATRIC" id="fig|1411691.4.peg.1703"/>
<dbReference type="EchoBASE" id="EB3612"/>
<dbReference type="eggNOG" id="COG0745">
    <property type="taxonomic scope" value="Bacteria"/>
</dbReference>
<dbReference type="HOGENOM" id="CLU_000445_30_1_6"/>
<dbReference type="InParanoid" id="P0ACZ8"/>
<dbReference type="OMA" id="KELMLMT"/>
<dbReference type="OrthoDB" id="9802426at2"/>
<dbReference type="PhylomeDB" id="P0ACZ8"/>
<dbReference type="BioCyc" id="EcoCyc:G6319-MONOMER"/>
<dbReference type="PRO" id="PR:P0ACZ8"/>
<dbReference type="Proteomes" id="UP000000625">
    <property type="component" value="Chromosome"/>
</dbReference>
<dbReference type="GO" id="GO:0005829">
    <property type="term" value="C:cytosol"/>
    <property type="evidence" value="ECO:0000318"/>
    <property type="project" value="GO_Central"/>
</dbReference>
<dbReference type="GO" id="GO:0032993">
    <property type="term" value="C:protein-DNA complex"/>
    <property type="evidence" value="ECO:0000318"/>
    <property type="project" value="GO_Central"/>
</dbReference>
<dbReference type="GO" id="GO:0003677">
    <property type="term" value="F:DNA binding"/>
    <property type="evidence" value="ECO:0000314"/>
    <property type="project" value="EcoCyc"/>
</dbReference>
<dbReference type="GO" id="GO:0042802">
    <property type="term" value="F:identical protein binding"/>
    <property type="evidence" value="ECO:0000353"/>
    <property type="project" value="IntAct"/>
</dbReference>
<dbReference type="GO" id="GO:0000156">
    <property type="term" value="F:phosphorelay response regulator activity"/>
    <property type="evidence" value="ECO:0000318"/>
    <property type="project" value="GO_Central"/>
</dbReference>
<dbReference type="GO" id="GO:0000976">
    <property type="term" value="F:transcription cis-regulatory region binding"/>
    <property type="evidence" value="ECO:0000318"/>
    <property type="project" value="GO_Central"/>
</dbReference>
<dbReference type="GO" id="GO:0006355">
    <property type="term" value="P:regulation of DNA-templated transcription"/>
    <property type="evidence" value="ECO:0000315"/>
    <property type="project" value="EcoCyc"/>
</dbReference>
<dbReference type="GO" id="GO:0046688">
    <property type="term" value="P:response to copper ion"/>
    <property type="evidence" value="ECO:0000314"/>
    <property type="project" value="EcoCyc"/>
</dbReference>
<dbReference type="CDD" id="cd19935">
    <property type="entry name" value="REC_OmpR_CusR-like"/>
    <property type="match status" value="1"/>
</dbReference>
<dbReference type="CDD" id="cd00383">
    <property type="entry name" value="trans_reg_C"/>
    <property type="match status" value="1"/>
</dbReference>
<dbReference type="FunFam" id="3.40.50.2300:FF:000001">
    <property type="entry name" value="DNA-binding response regulator PhoB"/>
    <property type="match status" value="1"/>
</dbReference>
<dbReference type="FunFam" id="1.10.10.10:FF:000005">
    <property type="entry name" value="Two-component system response regulator"/>
    <property type="match status" value="1"/>
</dbReference>
<dbReference type="Gene3D" id="3.40.50.2300">
    <property type="match status" value="1"/>
</dbReference>
<dbReference type="Gene3D" id="6.10.250.690">
    <property type="match status" value="1"/>
</dbReference>
<dbReference type="Gene3D" id="1.10.10.10">
    <property type="entry name" value="Winged helix-like DNA-binding domain superfamily/Winged helix DNA-binding domain"/>
    <property type="match status" value="1"/>
</dbReference>
<dbReference type="InterPro" id="IPR011006">
    <property type="entry name" value="CheY-like_superfamily"/>
</dbReference>
<dbReference type="InterPro" id="IPR006291">
    <property type="entry name" value="CusR-like"/>
</dbReference>
<dbReference type="InterPro" id="IPR001867">
    <property type="entry name" value="OmpR/PhoB-type_DNA-bd"/>
</dbReference>
<dbReference type="InterPro" id="IPR016032">
    <property type="entry name" value="Sig_transdc_resp-reg_C-effctor"/>
</dbReference>
<dbReference type="InterPro" id="IPR001789">
    <property type="entry name" value="Sig_transdc_resp-reg_receiver"/>
</dbReference>
<dbReference type="InterPro" id="IPR039420">
    <property type="entry name" value="WalR-like"/>
</dbReference>
<dbReference type="InterPro" id="IPR036388">
    <property type="entry name" value="WH-like_DNA-bd_sf"/>
</dbReference>
<dbReference type="NCBIfam" id="TIGR01387">
    <property type="entry name" value="cztR_silR_copR"/>
    <property type="match status" value="1"/>
</dbReference>
<dbReference type="NCBIfam" id="NF007346">
    <property type="entry name" value="PRK09836.1"/>
    <property type="match status" value="1"/>
</dbReference>
<dbReference type="PANTHER" id="PTHR48111">
    <property type="entry name" value="REGULATOR OF RPOS"/>
    <property type="match status" value="1"/>
</dbReference>
<dbReference type="PANTHER" id="PTHR48111:SF41">
    <property type="entry name" value="TRANSCRIPTIONAL REGULATORY PROTEIN CUSR-RELATED"/>
    <property type="match status" value="1"/>
</dbReference>
<dbReference type="Pfam" id="PF00072">
    <property type="entry name" value="Response_reg"/>
    <property type="match status" value="1"/>
</dbReference>
<dbReference type="Pfam" id="PF00486">
    <property type="entry name" value="Trans_reg_C"/>
    <property type="match status" value="1"/>
</dbReference>
<dbReference type="SMART" id="SM00448">
    <property type="entry name" value="REC"/>
    <property type="match status" value="1"/>
</dbReference>
<dbReference type="SMART" id="SM00862">
    <property type="entry name" value="Trans_reg_C"/>
    <property type="match status" value="1"/>
</dbReference>
<dbReference type="SUPFAM" id="SSF46894">
    <property type="entry name" value="C-terminal effector domain of the bipartite response regulators"/>
    <property type="match status" value="1"/>
</dbReference>
<dbReference type="SUPFAM" id="SSF52172">
    <property type="entry name" value="CheY-like"/>
    <property type="match status" value="1"/>
</dbReference>
<dbReference type="PROSITE" id="PS51755">
    <property type="entry name" value="OMPR_PHOB"/>
    <property type="match status" value="1"/>
</dbReference>
<dbReference type="PROSITE" id="PS50110">
    <property type="entry name" value="RESPONSE_REGULATORY"/>
    <property type="match status" value="1"/>
</dbReference>
<protein>
    <recommendedName>
        <fullName evidence="9">Transcriptional regulatory protein CusR</fullName>
    </recommendedName>
</protein>
<gene>
    <name type="primary">cusR</name>
    <name type="synonym">ylcA</name>
    <name type="ordered locus">b0571</name>
    <name type="ordered locus">JW0560</name>
</gene>
<reference key="1">
    <citation type="journal article" date="2000" name="J. Bacteriol.">
        <title>Identification of a copper-responsive two-component system on the chromosome of Escherichia coli K-12.</title>
        <authorList>
            <person name="Munson G.P."/>
            <person name="Lam D.L."/>
            <person name="Outten F.W."/>
            <person name="O'Halloran T.V."/>
        </authorList>
    </citation>
    <scope>NUCLEOTIDE SEQUENCE [GENOMIC DNA]</scope>
    <scope>FUNCTION</scope>
    <source>
        <strain>K12 / DH5-alpha</strain>
    </source>
</reference>
<reference key="2">
    <citation type="journal article" date="1996" name="DNA Res.">
        <title>A 718-kb DNA sequence of the Escherichia coli K-12 genome corresponding to the 12.7-28.0 min region on the linkage map.</title>
        <authorList>
            <person name="Oshima T."/>
            <person name="Aiba H."/>
            <person name="Baba T."/>
            <person name="Fujita K."/>
            <person name="Hayashi K."/>
            <person name="Honjo A."/>
            <person name="Ikemoto K."/>
            <person name="Inada T."/>
            <person name="Itoh T."/>
            <person name="Kajihara M."/>
            <person name="Kanai K."/>
            <person name="Kashimoto K."/>
            <person name="Kimura S."/>
            <person name="Kitagawa M."/>
            <person name="Makino K."/>
            <person name="Masuda S."/>
            <person name="Miki T."/>
            <person name="Mizobuchi K."/>
            <person name="Mori H."/>
            <person name="Motomura K."/>
            <person name="Nakamura Y."/>
            <person name="Nashimoto H."/>
            <person name="Nishio Y."/>
            <person name="Saito N."/>
            <person name="Sampei G."/>
            <person name="Seki Y."/>
            <person name="Tagami H."/>
            <person name="Takemoto K."/>
            <person name="Wada C."/>
            <person name="Yamamoto Y."/>
            <person name="Yano M."/>
            <person name="Horiuchi T."/>
        </authorList>
    </citation>
    <scope>NUCLEOTIDE SEQUENCE [LARGE SCALE GENOMIC DNA]</scope>
    <source>
        <strain>K12 / W3110 / ATCC 27325 / DSM 5911</strain>
    </source>
</reference>
<reference key="3">
    <citation type="submission" date="1997-01" db="EMBL/GenBank/DDBJ databases">
        <title>Sequence of minutes 4-25 of Escherichia coli.</title>
        <authorList>
            <person name="Chung E."/>
            <person name="Allen E."/>
            <person name="Araujo R."/>
            <person name="Aparicio A.M."/>
            <person name="Davis K."/>
            <person name="Duncan M."/>
            <person name="Federspiel N."/>
            <person name="Hyman R."/>
            <person name="Kalman S."/>
            <person name="Komp C."/>
            <person name="Kurdi O."/>
            <person name="Lew H."/>
            <person name="Lin D."/>
            <person name="Namath A."/>
            <person name="Oefner P."/>
            <person name="Roberts D."/>
            <person name="Schramm S."/>
            <person name="Davis R.W."/>
        </authorList>
    </citation>
    <scope>NUCLEOTIDE SEQUENCE [LARGE SCALE GENOMIC DNA]</scope>
    <source>
        <strain>K12 / MG1655 / ATCC 47076</strain>
    </source>
</reference>
<reference key="4">
    <citation type="journal article" date="1997" name="Science">
        <title>The complete genome sequence of Escherichia coli K-12.</title>
        <authorList>
            <person name="Blattner F.R."/>
            <person name="Plunkett G. III"/>
            <person name="Bloch C.A."/>
            <person name="Perna N.T."/>
            <person name="Burland V."/>
            <person name="Riley M."/>
            <person name="Collado-Vides J."/>
            <person name="Glasner J.D."/>
            <person name="Rode C.K."/>
            <person name="Mayhew G.F."/>
            <person name="Gregor J."/>
            <person name="Davis N.W."/>
            <person name="Kirkpatrick H.A."/>
            <person name="Goeden M.A."/>
            <person name="Rose D.J."/>
            <person name="Mau B."/>
            <person name="Shao Y."/>
        </authorList>
    </citation>
    <scope>NUCLEOTIDE SEQUENCE [LARGE SCALE GENOMIC DNA]</scope>
    <source>
        <strain>K12 / MG1655 / ATCC 47076</strain>
    </source>
</reference>
<reference key="5">
    <citation type="journal article" date="2006" name="Mol. Syst. Biol.">
        <title>Highly accurate genome sequences of Escherichia coli K-12 strains MG1655 and W3110.</title>
        <authorList>
            <person name="Hayashi K."/>
            <person name="Morooka N."/>
            <person name="Yamamoto Y."/>
            <person name="Fujita K."/>
            <person name="Isono K."/>
            <person name="Choi S."/>
            <person name="Ohtsubo E."/>
            <person name="Baba T."/>
            <person name="Wanner B.L."/>
            <person name="Mori H."/>
            <person name="Horiuchi T."/>
        </authorList>
    </citation>
    <scope>NUCLEOTIDE SEQUENCE [LARGE SCALE GENOMIC DNA]</scope>
    <source>
        <strain>K12 / W3110 / ATCC 27325 / DSM 5911</strain>
    </source>
</reference>
<reference key="6">
    <citation type="submission" date="1997-02" db="EMBL/GenBank/DDBJ databases">
        <authorList>
            <person name="Morel-Deville F."/>
            <person name="Ehrlich S.D."/>
            <person name="Morel P."/>
        </authorList>
    </citation>
    <scope>NUCLEOTIDE SEQUENCE [GENOMIC DNA] OF 9-94</scope>
    <source>
        <strain>HVC45</strain>
    </source>
</reference>
<reference key="7">
    <citation type="journal article" date="2001" name="J. Biol. Chem.">
        <title>The independent cue and cus systems confer copper tolerance during aerobic and anaerobic growth in Escherichia coli.</title>
        <authorList>
            <person name="Outten F.W."/>
            <person name="Huffman D.L."/>
            <person name="Hale J.A."/>
            <person name="O'Halloran T.V."/>
        </authorList>
    </citation>
    <scope>FUNCTION IN COPPER HOMEOSTASIS</scope>
    <source>
        <strain>K12</strain>
    </source>
</reference>
<reference key="8">
    <citation type="journal article" date="2001" name="Microbiology">
        <title>The product of the ybdE gene of the Escherichia coli chromosome is involved in detoxification of silver ions.</title>
        <authorList>
            <person name="Franke S."/>
            <person name="Grass G."/>
            <person name="Nies D.H."/>
        </authorList>
    </citation>
    <scope>PROBABLE FUNCTION IN SILVER HOMEOSTASIS</scope>
    <source>
        <strain>K38</strain>
    </source>
</reference>
<reference key="9">
    <citation type="journal article" date="2005" name="J. Biol. Chem.">
        <title>Functional characterization in vitro of all two-component signal transduction systems from Escherichia coli.</title>
        <authorList>
            <person name="Yamamoto K."/>
            <person name="Hirao K."/>
            <person name="Oshima T."/>
            <person name="Aiba H."/>
            <person name="Utsumi R."/>
            <person name="Ishihama A."/>
        </authorList>
    </citation>
    <scope>PHOSPHORYLATION</scope>
    <source>
        <strain>K12 / W3110 / ATCC 27325 / DSM 5911</strain>
    </source>
</reference>
<reference key="10">
    <citation type="journal article" date="2015" name="Microbiology">
        <title>Cooperative regulation of the common target genes between H(2)O(2)-sensing YedVW and Cu2+-sensing CusSR in Escherichia coli.</title>
        <authorList>
            <person name="Urano H."/>
            <person name="Umezawa Y."/>
            <person name="Yamamoto K."/>
            <person name="Ishihama A."/>
            <person name="Ogasawara H."/>
        </authorList>
    </citation>
    <scope>FUNCTION</scope>
    <scope>INTERPLAY BETWEEN HPRSR AND CUSSR</scope>
</reference>
<reference key="11">
    <citation type="journal article" date="2017" name="Microbiology">
        <title>Cross-regulation between two common ancestral response regulators, HprR and CusR, in Escherichia coli.</title>
        <authorList>
            <person name="Urano H."/>
            <person name="Yoshida M."/>
            <person name="Ogawa A."/>
            <person name="Yamamoto K."/>
            <person name="Ishihama A."/>
            <person name="Ogasawara H."/>
        </authorList>
    </citation>
    <scope>FUNCTION</scope>
    <scope>INTERPLAY BETWEEN HPRSR AND CUSSR</scope>
</reference>
<keyword id="KW-0010">Activator</keyword>
<keyword id="KW-0186">Copper</keyword>
<keyword id="KW-0963">Cytoplasm</keyword>
<keyword id="KW-0238">DNA-binding</keyword>
<keyword id="KW-0597">Phosphoprotein</keyword>
<keyword id="KW-1185">Reference proteome</keyword>
<keyword id="KW-0804">Transcription</keyword>
<keyword id="KW-0805">Transcription regulation</keyword>
<keyword id="KW-0902">Two-component regulatory system</keyword>
<sequence>MKLLIVEDEKKTGEYLTKGLTEAGFVVDLADNGLNGYHLAMTGDYDLIILDIMLPDVNGWDIVRMLRSANKGMPILLLTALGTIEHRVKGLELGADDYLVKPFAFAELLARVRTLLRRGAAVIIESQFQVADLMVDLVSRKVTRSGTRITLTSKEFTLLEFFLRHQGEVLPRSLIASQVWDMNFDSDTNAIDVAVKRLRGKIDNDFEPKLIQTVRGVGYMLEVPDGQ</sequence>
<accession>P0ACZ8</accession>
<accession>P77380</accession>
<comment type="function">
    <text evidence="3 4 5 7 8">Member of the two-component regulatory system CusS/CusR involved in response to copper and silver. Activates the expression of cusCFBA, hiuH and plasmid pRJ1004 gene pcoE in response to increasing levels of copper or silver ions. Can also increase the basal-level expression of copper resistance gene operon pcoABCD.</text>
</comment>
<comment type="interaction">
    <interactant intactId="EBI-1118807">
        <id>P0ACZ8</id>
    </interactant>
    <interactant intactId="EBI-1118807">
        <id>P0ACZ8</id>
        <label>cusR</label>
    </interactant>
    <organismsDiffer>false</organismsDiffer>
    <experiments>2</experiments>
</comment>
<comment type="subcellular location">
    <subcellularLocation>
        <location evidence="9">Cytoplasm</location>
    </subcellularLocation>
</comment>
<comment type="PTM">
    <text evidence="6">Phosphorylated by CusS.</text>
</comment>
<comment type="miscellaneous">
    <text evidence="5">The cus system plays an important role in copper tolerance under anaerobic growth and, under extreme copper stress, in aerobic growth.</text>
</comment>
<comment type="miscellaneous">
    <text evidence="7 8">HprSR and CusSR form a unique regulation system, where both two-component systems recognize and regulate the same set of genes, but under different environmental conditions. HprSR plays a role in H(2)O(2) response regulation, while CusSR plays a role in Cu(2+) response regulation (PubMed:25568260, PubMed:27983483). Under low protein concentrations, the two regulators recognize and transcribe both hiuH and cusC promoters, albeit at different efficiency, apparently in a collaborative fashion (PubMed:27983483).</text>
</comment>
<feature type="chain" id="PRO_0000081063" description="Transcriptional regulatory protein CusR">
    <location>
        <begin position="1"/>
        <end position="227"/>
    </location>
</feature>
<feature type="domain" description="Response regulatory" evidence="1">
    <location>
        <begin position="2"/>
        <end position="116"/>
    </location>
</feature>
<feature type="DNA-binding region" description="OmpR/PhoB-type" evidence="2">
    <location>
        <begin position="125"/>
        <end position="223"/>
    </location>
</feature>
<feature type="modified residue" description="4-aspartylphosphate" evidence="1">
    <location>
        <position position="51"/>
    </location>
</feature>